<name>PLSX_STRU0</name>
<accession>B9DSQ9</accession>
<evidence type="ECO:0000255" key="1">
    <source>
        <dbReference type="HAMAP-Rule" id="MF_00019"/>
    </source>
</evidence>
<gene>
    <name evidence="1" type="primary">plsX</name>
    <name type="ordered locus">SUB0023</name>
</gene>
<comment type="function">
    <text evidence="1">Catalyzes the reversible formation of acyl-phosphate (acyl-PO(4)) from acyl-[acyl-carrier-protein] (acyl-ACP). This enzyme utilizes acyl-ACP as fatty acyl donor, but not acyl-CoA.</text>
</comment>
<comment type="catalytic activity">
    <reaction evidence="1">
        <text>a fatty acyl-[ACP] + phosphate = an acyl phosphate + holo-[ACP]</text>
        <dbReference type="Rhea" id="RHEA:42292"/>
        <dbReference type="Rhea" id="RHEA-COMP:9685"/>
        <dbReference type="Rhea" id="RHEA-COMP:14125"/>
        <dbReference type="ChEBI" id="CHEBI:43474"/>
        <dbReference type="ChEBI" id="CHEBI:59918"/>
        <dbReference type="ChEBI" id="CHEBI:64479"/>
        <dbReference type="ChEBI" id="CHEBI:138651"/>
        <dbReference type="EC" id="2.3.1.274"/>
    </reaction>
</comment>
<comment type="pathway">
    <text evidence="1">Lipid metabolism; phospholipid metabolism.</text>
</comment>
<comment type="subunit">
    <text evidence="1">Homodimer. Probably interacts with PlsY.</text>
</comment>
<comment type="subcellular location">
    <subcellularLocation>
        <location evidence="1">Cytoplasm</location>
    </subcellularLocation>
    <text evidence="1">Associated with the membrane possibly through PlsY.</text>
</comment>
<comment type="similarity">
    <text evidence="1">Belongs to the PlsX family.</text>
</comment>
<reference key="1">
    <citation type="journal article" date="2009" name="BMC Genomics">
        <title>Evidence for niche adaptation in the genome of the bovine pathogen Streptococcus uberis.</title>
        <authorList>
            <person name="Ward P.N."/>
            <person name="Holden M.T.G."/>
            <person name="Leigh J.A."/>
            <person name="Lennard N."/>
            <person name="Bignell A."/>
            <person name="Barron A."/>
            <person name="Clark L."/>
            <person name="Quail M.A."/>
            <person name="Woodward J."/>
            <person name="Barrell B.G."/>
            <person name="Egan S.A."/>
            <person name="Field T.R."/>
            <person name="Maskell D."/>
            <person name="Kehoe M."/>
            <person name="Dowson C.G."/>
            <person name="Chanter N."/>
            <person name="Whatmore A.M."/>
            <person name="Bentley S.D."/>
            <person name="Parkhill J."/>
        </authorList>
    </citation>
    <scope>NUCLEOTIDE SEQUENCE [LARGE SCALE GENOMIC DNA]</scope>
    <source>
        <strain>ATCC BAA-854 / 0140J</strain>
    </source>
</reference>
<dbReference type="EC" id="2.3.1.274" evidence="1"/>
<dbReference type="EMBL" id="AM946015">
    <property type="protein sequence ID" value="CAR40357.1"/>
    <property type="molecule type" value="Genomic_DNA"/>
</dbReference>
<dbReference type="RefSeq" id="WP_012657593.1">
    <property type="nucleotide sequence ID" value="NC_012004.1"/>
</dbReference>
<dbReference type="SMR" id="B9DSQ9"/>
<dbReference type="STRING" id="218495.SUB0023"/>
<dbReference type="KEGG" id="sub:SUB0023"/>
<dbReference type="eggNOG" id="COG0416">
    <property type="taxonomic scope" value="Bacteria"/>
</dbReference>
<dbReference type="HOGENOM" id="CLU_039379_1_1_9"/>
<dbReference type="OrthoDB" id="9806408at2"/>
<dbReference type="UniPathway" id="UPA00085"/>
<dbReference type="Proteomes" id="UP000000449">
    <property type="component" value="Chromosome"/>
</dbReference>
<dbReference type="GO" id="GO:0005737">
    <property type="term" value="C:cytoplasm"/>
    <property type="evidence" value="ECO:0007669"/>
    <property type="project" value="UniProtKB-SubCell"/>
</dbReference>
<dbReference type="GO" id="GO:0043811">
    <property type="term" value="F:phosphate:acyl-[acyl carrier protein] acyltransferase activity"/>
    <property type="evidence" value="ECO:0007669"/>
    <property type="project" value="UniProtKB-UniRule"/>
</dbReference>
<dbReference type="GO" id="GO:0006633">
    <property type="term" value="P:fatty acid biosynthetic process"/>
    <property type="evidence" value="ECO:0007669"/>
    <property type="project" value="UniProtKB-UniRule"/>
</dbReference>
<dbReference type="GO" id="GO:0008654">
    <property type="term" value="P:phospholipid biosynthetic process"/>
    <property type="evidence" value="ECO:0007669"/>
    <property type="project" value="UniProtKB-KW"/>
</dbReference>
<dbReference type="Gene3D" id="3.40.718.10">
    <property type="entry name" value="Isopropylmalate Dehydrogenase"/>
    <property type="match status" value="1"/>
</dbReference>
<dbReference type="HAMAP" id="MF_00019">
    <property type="entry name" value="PlsX"/>
    <property type="match status" value="1"/>
</dbReference>
<dbReference type="InterPro" id="IPR003664">
    <property type="entry name" value="FA_synthesis"/>
</dbReference>
<dbReference type="InterPro" id="IPR012281">
    <property type="entry name" value="Phospholipid_synth_PlsX-like"/>
</dbReference>
<dbReference type="NCBIfam" id="TIGR00182">
    <property type="entry name" value="plsX"/>
    <property type="match status" value="1"/>
</dbReference>
<dbReference type="PANTHER" id="PTHR30100">
    <property type="entry name" value="FATTY ACID/PHOSPHOLIPID SYNTHESIS PROTEIN PLSX"/>
    <property type="match status" value="1"/>
</dbReference>
<dbReference type="PANTHER" id="PTHR30100:SF1">
    <property type="entry name" value="PHOSPHATE ACYLTRANSFERASE"/>
    <property type="match status" value="1"/>
</dbReference>
<dbReference type="Pfam" id="PF02504">
    <property type="entry name" value="FA_synthesis"/>
    <property type="match status" value="1"/>
</dbReference>
<dbReference type="PIRSF" id="PIRSF002465">
    <property type="entry name" value="Phsphlp_syn_PlsX"/>
    <property type="match status" value="1"/>
</dbReference>
<dbReference type="SUPFAM" id="SSF53659">
    <property type="entry name" value="Isocitrate/Isopropylmalate dehydrogenase-like"/>
    <property type="match status" value="1"/>
</dbReference>
<sequence length="335" mass="35690">MKKIAIDAMGGDNAPQAIIEGVNRALASFKDIEIQLYGDQEKIKHYLESEERVTIIHTDEKIDSDDEPAKAIRRKKNASMVLAAKAVKEGQADAVLSAGNTGALLAAGLFVVGRIKGVDRPGLMSTLPTTNQKGFDMLDLGANAENTASHLHQYAILGSFYAKNVRGIAKPRVGLLNNGTEETKGDPLRKETYALLSQDPNIHFIGNVEARDLMSGVADVVVADGFTGNAVLKSIEGTALSIMKQLKSSIKGGGFKAKLGALLLKESLSDMKHSLDYSGAGGAVLFGLKAPVVKSHGSSDANSIYYTIKQVRTMLETNVVGQLSEAFSKETISND</sequence>
<organism>
    <name type="scientific">Streptococcus uberis (strain ATCC BAA-854 / 0140J)</name>
    <dbReference type="NCBI Taxonomy" id="218495"/>
    <lineage>
        <taxon>Bacteria</taxon>
        <taxon>Bacillati</taxon>
        <taxon>Bacillota</taxon>
        <taxon>Bacilli</taxon>
        <taxon>Lactobacillales</taxon>
        <taxon>Streptococcaceae</taxon>
        <taxon>Streptococcus</taxon>
    </lineage>
</organism>
<proteinExistence type="inferred from homology"/>
<keyword id="KW-0963">Cytoplasm</keyword>
<keyword id="KW-0444">Lipid biosynthesis</keyword>
<keyword id="KW-0443">Lipid metabolism</keyword>
<keyword id="KW-0594">Phospholipid biosynthesis</keyword>
<keyword id="KW-1208">Phospholipid metabolism</keyword>
<keyword id="KW-1185">Reference proteome</keyword>
<keyword id="KW-0808">Transferase</keyword>
<feature type="chain" id="PRO_1000193152" description="Phosphate acyltransferase">
    <location>
        <begin position="1"/>
        <end position="335"/>
    </location>
</feature>
<protein>
    <recommendedName>
        <fullName evidence="1">Phosphate acyltransferase</fullName>
        <ecNumber evidence="1">2.3.1.274</ecNumber>
    </recommendedName>
    <alternativeName>
        <fullName evidence="1">Acyl-ACP phosphotransacylase</fullName>
    </alternativeName>
    <alternativeName>
        <fullName evidence="1">Acyl-[acyl-carrier-protein]--phosphate acyltransferase</fullName>
    </alternativeName>
    <alternativeName>
        <fullName evidence="1">Phosphate-acyl-ACP acyltransferase</fullName>
    </alternativeName>
</protein>